<reference key="1">
    <citation type="journal article" date="2004" name="Genome Res.">
        <title>The status, quality, and expansion of the NIH full-length cDNA project: the Mammalian Gene Collection (MGC).</title>
        <authorList>
            <consortium name="The MGC Project Team"/>
        </authorList>
    </citation>
    <scope>NUCLEOTIDE SEQUENCE [LARGE SCALE MRNA]</scope>
    <source>
        <tissue>Kidney</tissue>
    </source>
</reference>
<proteinExistence type="evidence at transcript level"/>
<organism>
    <name type="scientific">Rattus norvegicus</name>
    <name type="common">Rat</name>
    <dbReference type="NCBI Taxonomy" id="10116"/>
    <lineage>
        <taxon>Eukaryota</taxon>
        <taxon>Metazoa</taxon>
        <taxon>Chordata</taxon>
        <taxon>Craniata</taxon>
        <taxon>Vertebrata</taxon>
        <taxon>Euteleostomi</taxon>
        <taxon>Mammalia</taxon>
        <taxon>Eutheria</taxon>
        <taxon>Euarchontoglires</taxon>
        <taxon>Glires</taxon>
        <taxon>Rodentia</taxon>
        <taxon>Myomorpha</taxon>
        <taxon>Muroidea</taxon>
        <taxon>Muridae</taxon>
        <taxon>Murinae</taxon>
        <taxon>Rattus</taxon>
    </lineage>
</organism>
<sequence length="226" mass="24684">METVVIVAIGVLATIFLASFAALVVVCRQRYCRPRDLLQRYDSKPIVDLIGAMETQSEPSELELDDVVITNPHIEAILENEDWIEDASGLMSHCIAILKICHTLTEKLVAMTMGSGAKMKTSASVSDIIVVAKRISPRVDDVVKSMYPPLDPKLLDARTTALLLSVSHLVLVTRNACHLTGGLDWIDQSLSAAEEHLEVLREAALASEPDKSLPNPEGFLQEQSAI</sequence>
<comment type="function">
    <text evidence="1">Functions as a negative regulator of MYRF in oligodendrocyte differentiation and myelination. Interacts with the C-terminal of MYRF inhibiting MYRF self-cleavage and N-fragment nuclear translocation. The secreted form promotes differentiation of T helper 1 cells (Th1).</text>
</comment>
<comment type="subunit">
    <text evidence="1">Interacts (via N-terminal region) with MYRF; the interaction inhibits MYRF self-cleavage.</text>
</comment>
<comment type="subcellular location">
    <subcellularLocation>
        <location evidence="1">Endoplasmic reticulum membrane</location>
        <topology evidence="2">Single-pass type II membrane protein</topology>
    </subcellularLocation>
    <subcellularLocation>
        <location evidence="2">Cell membrane</location>
        <topology evidence="2">Single-pass type II membrane protein</topology>
    </subcellularLocation>
    <subcellularLocation>
        <location evidence="1">Secreted</location>
    </subcellularLocation>
    <subcellularLocation>
        <location evidence="2">Secreted</location>
        <location evidence="2">Extracellular exosome</location>
    </subcellularLocation>
    <text evidence="2">Secreted by exosomes through a non-classical pathway.</text>
</comment>
<comment type="similarity">
    <text evidence="5">Belongs to the TMEM98 family.</text>
</comment>
<gene>
    <name type="primary">Tmem98</name>
</gene>
<keyword id="KW-1003">Cell membrane</keyword>
<keyword id="KW-0256">Endoplasmic reticulum</keyword>
<keyword id="KW-0472">Membrane</keyword>
<keyword id="KW-1185">Reference proteome</keyword>
<keyword id="KW-0964">Secreted</keyword>
<keyword id="KW-0812">Transmembrane</keyword>
<keyword id="KW-1133">Transmembrane helix</keyword>
<evidence type="ECO:0000250" key="1">
    <source>
        <dbReference type="UniProtKB" id="Q91X86"/>
    </source>
</evidence>
<evidence type="ECO:0000250" key="2">
    <source>
        <dbReference type="UniProtKB" id="Q9Y2Y6"/>
    </source>
</evidence>
<evidence type="ECO:0000255" key="3"/>
<evidence type="ECO:0000256" key="4">
    <source>
        <dbReference type="SAM" id="MobiDB-lite"/>
    </source>
</evidence>
<evidence type="ECO:0000305" key="5"/>
<accession>Q6AYS5</accession>
<feature type="chain" id="PRO_0000251713" description="Transmembrane protein 98">
    <location>
        <begin position="1"/>
        <end position="226"/>
    </location>
</feature>
<feature type="topological domain" description="Cytoplasmic" evidence="2">
    <location>
        <begin position="1"/>
        <end position="3"/>
    </location>
</feature>
<feature type="transmembrane region" description="Helical" evidence="3">
    <location>
        <begin position="4"/>
        <end position="24"/>
    </location>
</feature>
<feature type="topological domain" description="Extracellular" evidence="2">
    <location>
        <begin position="25"/>
        <end position="226"/>
    </location>
</feature>
<feature type="region of interest" description="Required for interaction with MYRF" evidence="1">
    <location>
        <begin position="1"/>
        <end position="88"/>
    </location>
</feature>
<feature type="region of interest" description="Disordered" evidence="4">
    <location>
        <begin position="207"/>
        <end position="226"/>
    </location>
</feature>
<name>TMM98_RAT</name>
<dbReference type="EMBL" id="BC078932">
    <property type="protein sequence ID" value="AAH78932.1"/>
    <property type="molecule type" value="mRNA"/>
</dbReference>
<dbReference type="RefSeq" id="NP_001007673.1">
    <property type="nucleotide sequence ID" value="NM_001007672.1"/>
</dbReference>
<dbReference type="SMR" id="Q6AYS5"/>
<dbReference type="FunCoup" id="Q6AYS5">
    <property type="interactions" value="220"/>
</dbReference>
<dbReference type="STRING" id="10116.ENSRNOP00000038394"/>
<dbReference type="PhosphoSitePlus" id="Q6AYS5"/>
<dbReference type="PaxDb" id="10116-ENSRNOP00000038394"/>
<dbReference type="Ensembl" id="ENSRNOT00000037072.5">
    <property type="protein sequence ID" value="ENSRNOP00000038394.3"/>
    <property type="gene ID" value="ENSRNOG00000021316.5"/>
</dbReference>
<dbReference type="GeneID" id="303356"/>
<dbReference type="KEGG" id="rno:303356"/>
<dbReference type="AGR" id="RGD:1359736"/>
<dbReference type="CTD" id="26022"/>
<dbReference type="RGD" id="1359736">
    <property type="gene designation" value="Tmem98"/>
</dbReference>
<dbReference type="eggNOG" id="ENOG502QT8U">
    <property type="taxonomic scope" value="Eukaryota"/>
</dbReference>
<dbReference type="GeneTree" id="ENSGT00390000012062"/>
<dbReference type="HOGENOM" id="CLU_084317_0_0_1"/>
<dbReference type="InParanoid" id="Q6AYS5"/>
<dbReference type="OMA" id="HMEVIRE"/>
<dbReference type="OrthoDB" id="38662at9989"/>
<dbReference type="PhylomeDB" id="Q6AYS5"/>
<dbReference type="TreeFam" id="TF336444"/>
<dbReference type="PRO" id="PR:Q6AYS5"/>
<dbReference type="Proteomes" id="UP000002494">
    <property type="component" value="Chromosome 10"/>
</dbReference>
<dbReference type="Bgee" id="ENSRNOG00000021316">
    <property type="expression patterns" value="Expressed in stomach and 20 other cell types or tissues"/>
</dbReference>
<dbReference type="GO" id="GO:0005783">
    <property type="term" value="C:endoplasmic reticulum"/>
    <property type="evidence" value="ECO:0000318"/>
    <property type="project" value="GO_Central"/>
</dbReference>
<dbReference type="GO" id="GO:0005789">
    <property type="term" value="C:endoplasmic reticulum membrane"/>
    <property type="evidence" value="ECO:0000250"/>
    <property type="project" value="UniProtKB"/>
</dbReference>
<dbReference type="GO" id="GO:0070062">
    <property type="term" value="C:extracellular exosome"/>
    <property type="evidence" value="ECO:0000250"/>
    <property type="project" value="UniProtKB"/>
</dbReference>
<dbReference type="GO" id="GO:0005615">
    <property type="term" value="C:extracellular space"/>
    <property type="evidence" value="ECO:0000250"/>
    <property type="project" value="UniProtKB"/>
</dbReference>
<dbReference type="GO" id="GO:0005886">
    <property type="term" value="C:plasma membrane"/>
    <property type="evidence" value="ECO:0000250"/>
    <property type="project" value="UniProtKB"/>
</dbReference>
<dbReference type="GO" id="GO:0031642">
    <property type="term" value="P:negative regulation of myelination"/>
    <property type="evidence" value="ECO:0000250"/>
    <property type="project" value="UniProtKB"/>
</dbReference>
<dbReference type="GO" id="GO:0048715">
    <property type="term" value="P:negative regulation of oligodendrocyte differentiation"/>
    <property type="evidence" value="ECO:0000250"/>
    <property type="project" value="UniProtKB"/>
</dbReference>
<dbReference type="GO" id="GO:1900181">
    <property type="term" value="P:negative regulation of protein localization to nucleus"/>
    <property type="evidence" value="ECO:0000250"/>
    <property type="project" value="UniProtKB"/>
</dbReference>
<dbReference type="GO" id="GO:0010955">
    <property type="term" value="P:negative regulation of protein processing"/>
    <property type="evidence" value="ECO:0000250"/>
    <property type="project" value="UniProtKB"/>
</dbReference>
<dbReference type="GO" id="GO:0045063">
    <property type="term" value="P:T-helper 1 cell differentiation"/>
    <property type="evidence" value="ECO:0000250"/>
    <property type="project" value="UniProtKB"/>
</dbReference>
<dbReference type="FunFam" id="1.20.1410.10:FF:000003">
    <property type="entry name" value="Transmembrane protein 98"/>
    <property type="match status" value="1"/>
</dbReference>
<dbReference type="Gene3D" id="1.20.1410.10">
    <property type="entry name" value="I/LWEQ domain"/>
    <property type="match status" value="1"/>
</dbReference>
<dbReference type="InterPro" id="IPR029668">
    <property type="entry name" value="TMEM98"/>
</dbReference>
<dbReference type="PANTHER" id="PTHR32510">
    <property type="entry name" value="TRANSMEMBRANE PROTEIN 98"/>
    <property type="match status" value="1"/>
</dbReference>
<dbReference type="PANTHER" id="PTHR32510:SF3">
    <property type="entry name" value="TRANSMEMBRANE PROTEIN 98"/>
    <property type="match status" value="1"/>
</dbReference>
<protein>
    <recommendedName>
        <fullName>Transmembrane protein 98</fullName>
    </recommendedName>
</protein>